<proteinExistence type="inferred from homology"/>
<reference key="1">
    <citation type="submission" date="2005-08" db="EMBL/GenBank/DDBJ databases">
        <title>Complete sequence of Chlorobium chlorochromatii CaD3.</title>
        <authorList>
            <consortium name="US DOE Joint Genome Institute"/>
            <person name="Copeland A."/>
            <person name="Lucas S."/>
            <person name="Lapidus A."/>
            <person name="Barry K."/>
            <person name="Detter J.C."/>
            <person name="Glavina T."/>
            <person name="Hammon N."/>
            <person name="Israni S."/>
            <person name="Pitluck S."/>
            <person name="Bryant D."/>
            <person name="Schmutz J."/>
            <person name="Larimer F."/>
            <person name="Land M."/>
            <person name="Kyrpides N."/>
            <person name="Ivanova N."/>
            <person name="Richardson P."/>
        </authorList>
    </citation>
    <scope>NUCLEOTIDE SEQUENCE [LARGE SCALE GENOMIC DNA]</scope>
    <source>
        <strain>CaD3</strain>
    </source>
</reference>
<comment type="catalytic activity">
    <reaction evidence="1">
        <text>N-(5-phospho-beta-D-ribosyl)anthranilate = 1-(2-carboxyphenylamino)-1-deoxy-D-ribulose 5-phosphate</text>
        <dbReference type="Rhea" id="RHEA:21540"/>
        <dbReference type="ChEBI" id="CHEBI:18277"/>
        <dbReference type="ChEBI" id="CHEBI:58613"/>
        <dbReference type="EC" id="5.3.1.24"/>
    </reaction>
</comment>
<comment type="pathway">
    <text evidence="1">Amino-acid biosynthesis; L-tryptophan biosynthesis; L-tryptophan from chorismate: step 3/5.</text>
</comment>
<comment type="similarity">
    <text evidence="1">Belongs to the TrpF family.</text>
</comment>
<name>TRPF_CHLCH</name>
<organism>
    <name type="scientific">Chlorobium chlorochromatii (strain CaD3)</name>
    <dbReference type="NCBI Taxonomy" id="340177"/>
    <lineage>
        <taxon>Bacteria</taxon>
        <taxon>Pseudomonadati</taxon>
        <taxon>Chlorobiota</taxon>
        <taxon>Chlorobiia</taxon>
        <taxon>Chlorobiales</taxon>
        <taxon>Chlorobiaceae</taxon>
        <taxon>Chlorobium/Pelodictyon group</taxon>
        <taxon>Chlorobium</taxon>
    </lineage>
</organism>
<protein>
    <recommendedName>
        <fullName evidence="1">N-(5'-phosphoribosyl)anthranilate isomerase</fullName>
        <shortName evidence="1">PRAI</shortName>
        <ecNumber evidence="1">5.3.1.24</ecNumber>
    </recommendedName>
</protein>
<sequence length="217" mass="23460">MTHIQPKIKICGITRLEDALAATFAGADALGFNFSHTSARYIAPNNAAAIIKQLPPFVQTVGIFVEQSPSEINAIAQTCNLHYAQLHNDLYGVKEALAITTLPVIKVFRPNENFDVQEVKAFIGESHVTTYLFDAYRPDAHGGTGERIEATLAERIFQAMGNECYAILAGGLTPNNVAEAIRRIRPYGVDTASGVEKAPGIKDVAKMRAFVTAAQNA</sequence>
<keyword id="KW-0028">Amino-acid biosynthesis</keyword>
<keyword id="KW-0057">Aromatic amino acid biosynthesis</keyword>
<keyword id="KW-0413">Isomerase</keyword>
<keyword id="KW-0822">Tryptophan biosynthesis</keyword>
<accession>Q3AQC1</accession>
<evidence type="ECO:0000255" key="1">
    <source>
        <dbReference type="HAMAP-Rule" id="MF_00135"/>
    </source>
</evidence>
<gene>
    <name evidence="1" type="primary">trpF</name>
    <name type="ordered locus">Cag_1549</name>
</gene>
<dbReference type="EC" id="5.3.1.24" evidence="1"/>
<dbReference type="EMBL" id="CP000108">
    <property type="protein sequence ID" value="ABB28804.1"/>
    <property type="molecule type" value="Genomic_DNA"/>
</dbReference>
<dbReference type="SMR" id="Q3AQC1"/>
<dbReference type="STRING" id="340177.Cag_1549"/>
<dbReference type="KEGG" id="cch:Cag_1549"/>
<dbReference type="eggNOG" id="COG0135">
    <property type="taxonomic scope" value="Bacteria"/>
</dbReference>
<dbReference type="HOGENOM" id="CLU_076364_2_0_10"/>
<dbReference type="OrthoDB" id="9786954at2"/>
<dbReference type="UniPathway" id="UPA00035">
    <property type="reaction ID" value="UER00042"/>
</dbReference>
<dbReference type="GO" id="GO:0004640">
    <property type="term" value="F:phosphoribosylanthranilate isomerase activity"/>
    <property type="evidence" value="ECO:0007669"/>
    <property type="project" value="UniProtKB-UniRule"/>
</dbReference>
<dbReference type="GO" id="GO:0000162">
    <property type="term" value="P:L-tryptophan biosynthetic process"/>
    <property type="evidence" value="ECO:0007669"/>
    <property type="project" value="UniProtKB-UniRule"/>
</dbReference>
<dbReference type="CDD" id="cd00405">
    <property type="entry name" value="PRAI"/>
    <property type="match status" value="1"/>
</dbReference>
<dbReference type="Gene3D" id="3.20.20.70">
    <property type="entry name" value="Aldolase class I"/>
    <property type="match status" value="1"/>
</dbReference>
<dbReference type="HAMAP" id="MF_00135">
    <property type="entry name" value="PRAI"/>
    <property type="match status" value="1"/>
</dbReference>
<dbReference type="InterPro" id="IPR013785">
    <property type="entry name" value="Aldolase_TIM"/>
</dbReference>
<dbReference type="InterPro" id="IPR001240">
    <property type="entry name" value="PRAI_dom"/>
</dbReference>
<dbReference type="InterPro" id="IPR011060">
    <property type="entry name" value="RibuloseP-bd_barrel"/>
</dbReference>
<dbReference type="InterPro" id="IPR044643">
    <property type="entry name" value="TrpF_fam"/>
</dbReference>
<dbReference type="PANTHER" id="PTHR42894">
    <property type="entry name" value="N-(5'-PHOSPHORIBOSYL)ANTHRANILATE ISOMERASE"/>
    <property type="match status" value="1"/>
</dbReference>
<dbReference type="PANTHER" id="PTHR42894:SF1">
    <property type="entry name" value="N-(5'-PHOSPHORIBOSYL)ANTHRANILATE ISOMERASE"/>
    <property type="match status" value="1"/>
</dbReference>
<dbReference type="Pfam" id="PF00697">
    <property type="entry name" value="PRAI"/>
    <property type="match status" value="1"/>
</dbReference>
<dbReference type="SUPFAM" id="SSF51366">
    <property type="entry name" value="Ribulose-phoshate binding barrel"/>
    <property type="match status" value="1"/>
</dbReference>
<feature type="chain" id="PRO_1000018587" description="N-(5'-phosphoribosyl)anthranilate isomerase">
    <location>
        <begin position="1"/>
        <end position="217"/>
    </location>
</feature>